<proteinExistence type="inferred from homology"/>
<feature type="chain" id="PRO_1000081326" description="Glycogen synthase">
    <location>
        <begin position="1"/>
        <end position="484"/>
    </location>
</feature>
<feature type="binding site" evidence="1">
    <location>
        <position position="15"/>
    </location>
    <ligand>
        <name>ADP-alpha-D-glucose</name>
        <dbReference type="ChEBI" id="CHEBI:57498"/>
    </ligand>
</feature>
<reference key="1">
    <citation type="submission" date="2007-05" db="EMBL/GenBank/DDBJ databases">
        <title>Complete sequence of Geobacter uraniireducens Rf4.</title>
        <authorList>
            <consortium name="US DOE Joint Genome Institute"/>
            <person name="Copeland A."/>
            <person name="Lucas S."/>
            <person name="Lapidus A."/>
            <person name="Barry K."/>
            <person name="Detter J.C."/>
            <person name="Glavina del Rio T."/>
            <person name="Hammon N."/>
            <person name="Israni S."/>
            <person name="Dalin E."/>
            <person name="Tice H."/>
            <person name="Pitluck S."/>
            <person name="Chertkov O."/>
            <person name="Brettin T."/>
            <person name="Bruce D."/>
            <person name="Han C."/>
            <person name="Schmutz J."/>
            <person name="Larimer F."/>
            <person name="Land M."/>
            <person name="Hauser L."/>
            <person name="Kyrpides N."/>
            <person name="Mikhailova N."/>
            <person name="Shelobolina E."/>
            <person name="Aklujkar M."/>
            <person name="Lovley D."/>
            <person name="Richardson P."/>
        </authorList>
    </citation>
    <scope>NUCLEOTIDE SEQUENCE [LARGE SCALE GENOMIC DNA]</scope>
    <source>
        <strain>ATCC BAA-1134 / JCM 13001 / Rf4</strain>
    </source>
</reference>
<name>GLGA_GEOUR</name>
<sequence>MKILFVASEVTPFAKTGGLADVTAALPKTLKKLGHDVRIILPFYSEVERGGHGIRKGRKSVEAVIDGVMKKGLFRHTSLGDIPVYLIENKEYFSRDNLYGTAAGEYPDNHRRFAFFCRGVLDLLKKMDFRPDVIHCHDWQTALIPLLLRREKGEDLFFSKTGVMFTIHNLAYQGLFAKETLAEMGLDSSYFTIDCLEYYGKVNLMKGAILSADLITTVSETYCREIQTPESGNGLDGVLGVRNADLHGVLNGLDYDLWDPATDRGLYKNYSVTAPAGKAVNKKGLQKLLGLEPAADVPVIGIVSRLTAQKGFDLLAELMPKFVRSRLQLVILGTGDEKYLKLLQDIKARGAGNISVNIGFHPELAPKIYAGSDIFLMPSHYEPCGLGQMIALRYGAVPLVRKTGGLADTVFDEQDGATEPNGFSFEDYTPEALWETVSRSLQAFDDKGAWKKLMKRGMSCDYSWDASARRYEELYRLALARKGR</sequence>
<evidence type="ECO:0000255" key="1">
    <source>
        <dbReference type="HAMAP-Rule" id="MF_00484"/>
    </source>
</evidence>
<gene>
    <name evidence="1" type="primary">glgA</name>
    <name type="ordered locus">Gura_0858</name>
</gene>
<protein>
    <recommendedName>
        <fullName evidence="1">Glycogen synthase</fullName>
        <ecNumber evidence="1">2.4.1.21</ecNumber>
    </recommendedName>
    <alternativeName>
        <fullName evidence="1">Starch [bacterial glycogen] synthase</fullName>
    </alternativeName>
</protein>
<accession>A5GBI7</accession>
<dbReference type="EC" id="2.4.1.21" evidence="1"/>
<dbReference type="EMBL" id="CP000698">
    <property type="protein sequence ID" value="ABQ25064.1"/>
    <property type="molecule type" value="Genomic_DNA"/>
</dbReference>
<dbReference type="RefSeq" id="WP_011937788.1">
    <property type="nucleotide sequence ID" value="NC_009483.1"/>
</dbReference>
<dbReference type="SMR" id="A5GBI7"/>
<dbReference type="STRING" id="351605.Gura_0858"/>
<dbReference type="CAZy" id="GT5">
    <property type="family name" value="Glycosyltransferase Family 5"/>
</dbReference>
<dbReference type="KEGG" id="gur:Gura_0858"/>
<dbReference type="HOGENOM" id="CLU_009583_18_2_7"/>
<dbReference type="OrthoDB" id="9808590at2"/>
<dbReference type="UniPathway" id="UPA00164"/>
<dbReference type="Proteomes" id="UP000006695">
    <property type="component" value="Chromosome"/>
</dbReference>
<dbReference type="GO" id="GO:0005829">
    <property type="term" value="C:cytosol"/>
    <property type="evidence" value="ECO:0007669"/>
    <property type="project" value="TreeGrafter"/>
</dbReference>
<dbReference type="GO" id="GO:0009011">
    <property type="term" value="F:alpha-1,4-glucan glucosyltransferase (ADP-glucose donor) activity"/>
    <property type="evidence" value="ECO:0007669"/>
    <property type="project" value="UniProtKB-UniRule"/>
</dbReference>
<dbReference type="GO" id="GO:0004373">
    <property type="term" value="F:alpha-1,4-glucan glucosyltransferase (UDP-glucose donor) activity"/>
    <property type="evidence" value="ECO:0007669"/>
    <property type="project" value="InterPro"/>
</dbReference>
<dbReference type="GO" id="GO:0005978">
    <property type="term" value="P:glycogen biosynthetic process"/>
    <property type="evidence" value="ECO:0007669"/>
    <property type="project" value="UniProtKB-UniRule"/>
</dbReference>
<dbReference type="CDD" id="cd03791">
    <property type="entry name" value="GT5_Glycogen_synthase_DULL1-like"/>
    <property type="match status" value="1"/>
</dbReference>
<dbReference type="Gene3D" id="3.40.50.2000">
    <property type="entry name" value="Glycogen Phosphorylase B"/>
    <property type="match status" value="2"/>
</dbReference>
<dbReference type="HAMAP" id="MF_00484">
    <property type="entry name" value="Glycogen_synth"/>
    <property type="match status" value="1"/>
</dbReference>
<dbReference type="InterPro" id="IPR001296">
    <property type="entry name" value="Glyco_trans_1"/>
</dbReference>
<dbReference type="InterPro" id="IPR011835">
    <property type="entry name" value="GS/SS"/>
</dbReference>
<dbReference type="InterPro" id="IPR013534">
    <property type="entry name" value="Starch_synth_cat_dom"/>
</dbReference>
<dbReference type="NCBIfam" id="TIGR02095">
    <property type="entry name" value="glgA"/>
    <property type="match status" value="1"/>
</dbReference>
<dbReference type="NCBIfam" id="NF001899">
    <property type="entry name" value="PRK00654.1-2"/>
    <property type="match status" value="1"/>
</dbReference>
<dbReference type="PANTHER" id="PTHR45825:SF11">
    <property type="entry name" value="ALPHA AMYLASE DOMAIN-CONTAINING PROTEIN"/>
    <property type="match status" value="1"/>
</dbReference>
<dbReference type="PANTHER" id="PTHR45825">
    <property type="entry name" value="GRANULE-BOUND STARCH SYNTHASE 1, CHLOROPLASTIC/AMYLOPLASTIC"/>
    <property type="match status" value="1"/>
</dbReference>
<dbReference type="Pfam" id="PF08323">
    <property type="entry name" value="Glyco_transf_5"/>
    <property type="match status" value="1"/>
</dbReference>
<dbReference type="Pfam" id="PF00534">
    <property type="entry name" value="Glycos_transf_1"/>
    <property type="match status" value="1"/>
</dbReference>
<dbReference type="SUPFAM" id="SSF53756">
    <property type="entry name" value="UDP-Glycosyltransferase/glycogen phosphorylase"/>
    <property type="match status" value="1"/>
</dbReference>
<keyword id="KW-0320">Glycogen biosynthesis</keyword>
<keyword id="KW-0328">Glycosyltransferase</keyword>
<keyword id="KW-1185">Reference proteome</keyword>
<keyword id="KW-0808">Transferase</keyword>
<comment type="function">
    <text evidence="1">Synthesizes alpha-1,4-glucan chains using ADP-glucose.</text>
</comment>
<comment type="catalytic activity">
    <reaction evidence="1">
        <text>[(1-&gt;4)-alpha-D-glucosyl](n) + ADP-alpha-D-glucose = [(1-&gt;4)-alpha-D-glucosyl](n+1) + ADP + H(+)</text>
        <dbReference type="Rhea" id="RHEA:18189"/>
        <dbReference type="Rhea" id="RHEA-COMP:9584"/>
        <dbReference type="Rhea" id="RHEA-COMP:9587"/>
        <dbReference type="ChEBI" id="CHEBI:15378"/>
        <dbReference type="ChEBI" id="CHEBI:15444"/>
        <dbReference type="ChEBI" id="CHEBI:57498"/>
        <dbReference type="ChEBI" id="CHEBI:456216"/>
        <dbReference type="EC" id="2.4.1.21"/>
    </reaction>
</comment>
<comment type="pathway">
    <text evidence="1">Glycan biosynthesis; glycogen biosynthesis.</text>
</comment>
<comment type="similarity">
    <text evidence="1">Belongs to the glycosyltransferase 1 family. Bacterial/plant glycogen synthase subfamily.</text>
</comment>
<organism>
    <name type="scientific">Geotalea uraniireducens (strain Rf4)</name>
    <name type="common">Geobacter uraniireducens</name>
    <dbReference type="NCBI Taxonomy" id="351605"/>
    <lineage>
        <taxon>Bacteria</taxon>
        <taxon>Pseudomonadati</taxon>
        <taxon>Thermodesulfobacteriota</taxon>
        <taxon>Desulfuromonadia</taxon>
        <taxon>Geobacterales</taxon>
        <taxon>Geobacteraceae</taxon>
        <taxon>Geotalea</taxon>
    </lineage>
</organism>